<evidence type="ECO:0000250" key="1">
    <source>
        <dbReference type="UniProtKB" id="B1VN93"/>
    </source>
</evidence>
<evidence type="ECO:0000269" key="2">
    <source>
    </source>
</evidence>
<evidence type="ECO:0000303" key="3">
    <source>
    </source>
</evidence>
<evidence type="ECO:0000305" key="4"/>
<evidence type="ECO:0000305" key="5">
    <source>
    </source>
</evidence>
<reference key="1">
    <citation type="journal article" date="1997" name="J. Bacteriol.">
        <title>Butyrolactone autoregulator receptor protein (BarA) as a transcriptional regulator in Streptomyces virginiae.</title>
        <authorList>
            <person name="Kinoshita H."/>
            <person name="Ipposhi H."/>
            <person name="Okamoto S."/>
            <person name="Nakano H."/>
            <person name="Nihira T."/>
            <person name="Yamada Y."/>
        </authorList>
    </citation>
    <scope>NUCLEOTIDE SEQUENCE [GENOMIC DNA]</scope>
    <source>
        <strain>MAFF10-06014</strain>
    </source>
</reference>
<reference key="2">
    <citation type="journal article" date="2000" name="Mol. Microbiol.">
        <title>Identification of an AfsA homologue (BarX) from Streptomyces virginiae as a pleiotropic regulator controlling autoregulator biosynthesis, virginiamycin biosynthesis and virginiamycin M1 resistance.</title>
        <authorList>
            <person name="Kawachi R."/>
            <person name="Akashi T."/>
            <person name="Kamitani Y."/>
            <person name="Sy A."/>
            <person name="Wangchaisoonthorn U."/>
            <person name="Nihira T."/>
            <person name="Yamada Y."/>
        </authorList>
    </citation>
    <scope>PRELIMINARY FUNCTION</scope>
    <source>
        <strain>MAFF10-06014</strain>
    </source>
</reference>
<reference key="3">
    <citation type="journal article" date="2010" name="Microbiology">
        <title>Null mutation analysis of an afsA-family gene, barX, that is involved in biosynthesis of the {gamma}-butyrolactone autoregulator in Streptomyces virginiae.</title>
        <authorList>
            <person name="Lee Y.J."/>
            <person name="Kitani S."/>
            <person name="Nihira T."/>
        </authorList>
    </citation>
    <scope>FUNCTION</scope>
    <scope>DISRUPTION PHENOTYPE</scope>
</reference>
<dbReference type="EC" id="2.3.1.277" evidence="1"/>
<dbReference type="EMBL" id="AB001608">
    <property type="protein sequence ID" value="BAA23611.1"/>
    <property type="molecule type" value="Genomic_DNA"/>
</dbReference>
<dbReference type="RefSeq" id="WP_033220480.1">
    <property type="nucleotide sequence ID" value="NZ_CP107872.1"/>
</dbReference>
<dbReference type="SMR" id="O24738"/>
<dbReference type="BioCyc" id="MetaCyc:MONOMER-20202"/>
<dbReference type="BRENDA" id="2.3.1.277">
    <property type="organism ID" value="5959"/>
</dbReference>
<dbReference type="GO" id="GO:0016740">
    <property type="term" value="F:transferase activity"/>
    <property type="evidence" value="ECO:0007669"/>
    <property type="project" value="UniProtKB-KW"/>
</dbReference>
<dbReference type="InterPro" id="IPR047757">
    <property type="entry name" value="AfsA-like"/>
</dbReference>
<dbReference type="InterPro" id="IPR005509">
    <property type="entry name" value="AfsA_hotdog_dom"/>
</dbReference>
<dbReference type="NCBIfam" id="NF041195">
    <property type="entry name" value="ScbA_BarX_GamBu"/>
    <property type="match status" value="1"/>
</dbReference>
<dbReference type="Pfam" id="PF03756">
    <property type="entry name" value="AfsA"/>
    <property type="match status" value="2"/>
</dbReference>
<keyword id="KW-0808">Transferase</keyword>
<feature type="chain" id="PRO_0000450067" description="2-oxo-3-(phosphooxy)propyl 3-oxoalkanoate synthase">
    <location>
        <begin position="1"/>
        <end position="294"/>
    </location>
</feature>
<organism>
    <name type="scientific">Streptomyces virginiae</name>
    <name type="common">Streptomyces cinnamonensis</name>
    <dbReference type="NCBI Taxonomy" id="1961"/>
    <lineage>
        <taxon>Bacteria</taxon>
        <taxon>Bacillati</taxon>
        <taxon>Actinomycetota</taxon>
        <taxon>Actinomycetes</taxon>
        <taxon>Kitasatosporales</taxon>
        <taxon>Streptomycetaceae</taxon>
        <taxon>Streptomyces</taxon>
    </lineage>
</organism>
<protein>
    <recommendedName>
        <fullName evidence="1">2-oxo-3-(phosphooxy)propyl 3-oxoalkanoate synthase</fullName>
        <ecNumber evidence="1">2.3.1.277</ecNumber>
    </recommendedName>
</protein>
<name>BARX_STRVG</name>
<proteinExistence type="inferred from homology"/>
<sequence>MTSTVPRELVHRAAVAEVFLTGWSRTAENRFALTAQWPRAHSYFTPVNGCYDPLLASETIRQVGTLLSHAEFGVSFGDQFLMWDLHHSVRPEQAGVGAAPADLELDVICSDIRRRGRRLAGMRYEVTLYCGGQVIATGGAAFDCTSPAVYQRLRGDRVGATGVRPLPQPLAPASVGRFLTTDVVLSATERPLEWQLRVDEQHPVLFDHPVDHVPGMVLMESARQAAQAIDPSRPFLPTTMRSEFSRYAELDRPCWIQAEPLPAADNGDRQVRVTGHQDDTTVFSCLIGTRGAAE</sequence>
<comment type="function">
    <text evidence="2">Involved in the biosynthesis of virginiae butanolide (VB), a gamma-butyrolactone autoregulator that triggers the production of the streptogramin antibiotic virginiamycin.</text>
</comment>
<comment type="catalytic activity">
    <reaction evidence="1">
        <text>a medium-chain 3-oxoacyl-[ACP] + dihydroxyacetone phosphate = a (4-alkanoyl-5-oxo-2,5-dihydrofuran-3-yl)methyl phosphate + holo-[ACP] + H2O</text>
        <dbReference type="Rhea" id="RHEA:84095"/>
        <dbReference type="Rhea" id="RHEA-COMP:9685"/>
        <dbReference type="Rhea" id="RHEA-COMP:14764"/>
        <dbReference type="ChEBI" id="CHEBI:15377"/>
        <dbReference type="ChEBI" id="CHEBI:57642"/>
        <dbReference type="ChEBI" id="CHEBI:64479"/>
        <dbReference type="ChEBI" id="CHEBI:138603"/>
        <dbReference type="ChEBI" id="CHEBI:141052"/>
        <dbReference type="EC" id="2.3.1.277"/>
    </reaction>
</comment>
<comment type="disruption phenotype">
    <text evidence="2">Null mutant is unable to produce virginiamycin. Addition of VB restores the deficiency of virginiamycin production.</text>
</comment>
<comment type="similarity">
    <text evidence="4">Belongs to the AfsA family.</text>
</comment>
<comment type="caution">
    <text evidence="5">It was originally suggested that BarX is likely to participate in the regulatory pathway for the production of VB, rather than in the biosynthetic pathway of VB itself.</text>
</comment>
<gene>
    <name evidence="3" type="primary">barX</name>
</gene>
<accession>O24738</accession>